<evidence type="ECO:0000255" key="1">
    <source>
        <dbReference type="HAMAP-Rule" id="MF_00031"/>
    </source>
</evidence>
<protein>
    <recommendedName>
        <fullName evidence="1">Holliday junction branch migration complex subunit RuvA</fullName>
    </recommendedName>
</protein>
<comment type="function">
    <text evidence="1">The RuvA-RuvB-RuvC complex processes Holliday junction (HJ) DNA during genetic recombination and DNA repair, while the RuvA-RuvB complex plays an important role in the rescue of blocked DNA replication forks via replication fork reversal (RFR). RuvA specifically binds to HJ cruciform DNA, conferring on it an open structure. The RuvB hexamer acts as an ATP-dependent pump, pulling dsDNA into and through the RuvAB complex. HJ branch migration allows RuvC to scan DNA until it finds its consensus sequence, where it cleaves and resolves the cruciform DNA.</text>
</comment>
<comment type="subunit">
    <text evidence="1">Homotetramer. Forms an RuvA(8)-RuvB(12)-Holliday junction (HJ) complex. HJ DNA is sandwiched between 2 RuvA tetramers; dsDNA enters through RuvA and exits via RuvB. An RuvB hexamer assembles on each DNA strand where it exits the tetramer. Each RuvB hexamer is contacted by two RuvA subunits (via domain III) on 2 adjacent RuvB subunits; this complex drives branch migration. In the full resolvosome a probable DNA-RuvA(4)-RuvB(12)-RuvC(2) complex forms which resolves the HJ.</text>
</comment>
<comment type="subcellular location">
    <subcellularLocation>
        <location evidence="1">Cytoplasm</location>
    </subcellularLocation>
</comment>
<comment type="domain">
    <text evidence="1">Has three domains with a flexible linker between the domains II and III and assumes an 'L' shape. Domain III is highly mobile and contacts RuvB.</text>
</comment>
<comment type="similarity">
    <text evidence="1">Belongs to the RuvA family.</text>
</comment>
<feature type="chain" id="PRO_1000195152" description="Holliday junction branch migration complex subunit RuvA">
    <location>
        <begin position="1"/>
        <end position="212"/>
    </location>
</feature>
<feature type="region of interest" description="Domain I" evidence="1">
    <location>
        <begin position="1"/>
        <end position="66"/>
    </location>
</feature>
<feature type="region of interest" description="Domain II" evidence="1">
    <location>
        <begin position="67"/>
        <end position="145"/>
    </location>
</feature>
<feature type="region of interest" description="Flexible linker" evidence="1">
    <location>
        <begin position="146"/>
        <end position="162"/>
    </location>
</feature>
<feature type="region of interest" description="Domain III" evidence="1">
    <location>
        <begin position="163"/>
        <end position="212"/>
    </location>
</feature>
<sequence>MISGLKGTLKKLEVGYAHIETGGITYEVTISFKTYLELKSLPSHNEVQFQIFHAMNERGQKLFGFLTEQDKEFFKVIKGLQGIGELTALKILSFFSAEELYRIAQSGEAKELEKIPKVKGKTSEKIFFEVKQNLKKLELFLSGTSKEPSISLSSFSETPEEAALSRKREIAILGLVQLGFEEKTASKEVDKILKSSSPTDPGEIIREILKSL</sequence>
<dbReference type="EMBL" id="CP000348">
    <property type="protein sequence ID" value="ABJ78587.1"/>
    <property type="molecule type" value="Genomic_DNA"/>
</dbReference>
<dbReference type="RefSeq" id="WP_011669855.1">
    <property type="nucleotide sequence ID" value="NC_008508.1"/>
</dbReference>
<dbReference type="SMR" id="Q053A8"/>
<dbReference type="KEGG" id="lbl:LBL_1063"/>
<dbReference type="HOGENOM" id="CLU_087936_3_1_12"/>
<dbReference type="GO" id="GO:0005737">
    <property type="term" value="C:cytoplasm"/>
    <property type="evidence" value="ECO:0007669"/>
    <property type="project" value="UniProtKB-SubCell"/>
</dbReference>
<dbReference type="GO" id="GO:0009379">
    <property type="term" value="C:Holliday junction helicase complex"/>
    <property type="evidence" value="ECO:0007669"/>
    <property type="project" value="InterPro"/>
</dbReference>
<dbReference type="GO" id="GO:0048476">
    <property type="term" value="C:Holliday junction resolvase complex"/>
    <property type="evidence" value="ECO:0007669"/>
    <property type="project" value="UniProtKB-UniRule"/>
</dbReference>
<dbReference type="GO" id="GO:0005524">
    <property type="term" value="F:ATP binding"/>
    <property type="evidence" value="ECO:0007669"/>
    <property type="project" value="InterPro"/>
</dbReference>
<dbReference type="GO" id="GO:0000400">
    <property type="term" value="F:four-way junction DNA binding"/>
    <property type="evidence" value="ECO:0007669"/>
    <property type="project" value="UniProtKB-UniRule"/>
</dbReference>
<dbReference type="GO" id="GO:0009378">
    <property type="term" value="F:four-way junction helicase activity"/>
    <property type="evidence" value="ECO:0007669"/>
    <property type="project" value="InterPro"/>
</dbReference>
<dbReference type="GO" id="GO:0006310">
    <property type="term" value="P:DNA recombination"/>
    <property type="evidence" value="ECO:0007669"/>
    <property type="project" value="UniProtKB-UniRule"/>
</dbReference>
<dbReference type="GO" id="GO:0006281">
    <property type="term" value="P:DNA repair"/>
    <property type="evidence" value="ECO:0007669"/>
    <property type="project" value="UniProtKB-UniRule"/>
</dbReference>
<dbReference type="CDD" id="cd14332">
    <property type="entry name" value="UBA_RuvA_C"/>
    <property type="match status" value="1"/>
</dbReference>
<dbReference type="Gene3D" id="1.10.150.20">
    <property type="entry name" value="5' to 3' exonuclease, C-terminal subdomain"/>
    <property type="match status" value="1"/>
</dbReference>
<dbReference type="Gene3D" id="1.10.8.10">
    <property type="entry name" value="DNA helicase RuvA subunit, C-terminal domain"/>
    <property type="match status" value="1"/>
</dbReference>
<dbReference type="Gene3D" id="2.40.50.140">
    <property type="entry name" value="Nucleic acid-binding proteins"/>
    <property type="match status" value="1"/>
</dbReference>
<dbReference type="HAMAP" id="MF_00031">
    <property type="entry name" value="DNA_HJ_migration_RuvA"/>
    <property type="match status" value="1"/>
</dbReference>
<dbReference type="InterPro" id="IPR013849">
    <property type="entry name" value="DNA_helicase_Holl-junc_RuvA_I"/>
</dbReference>
<dbReference type="InterPro" id="IPR012340">
    <property type="entry name" value="NA-bd_OB-fold"/>
</dbReference>
<dbReference type="InterPro" id="IPR000085">
    <property type="entry name" value="RuvA"/>
</dbReference>
<dbReference type="InterPro" id="IPR010994">
    <property type="entry name" value="RuvA_2-like"/>
</dbReference>
<dbReference type="InterPro" id="IPR011114">
    <property type="entry name" value="RuvA_C"/>
</dbReference>
<dbReference type="InterPro" id="IPR036267">
    <property type="entry name" value="RuvA_C_sf"/>
</dbReference>
<dbReference type="NCBIfam" id="TIGR00084">
    <property type="entry name" value="ruvA"/>
    <property type="match status" value="1"/>
</dbReference>
<dbReference type="Pfam" id="PF01330">
    <property type="entry name" value="RuvA_N"/>
    <property type="match status" value="1"/>
</dbReference>
<dbReference type="SUPFAM" id="SSF46929">
    <property type="entry name" value="DNA helicase RuvA subunit, C-terminal domain"/>
    <property type="match status" value="1"/>
</dbReference>
<dbReference type="SUPFAM" id="SSF50249">
    <property type="entry name" value="Nucleic acid-binding proteins"/>
    <property type="match status" value="1"/>
</dbReference>
<dbReference type="SUPFAM" id="SSF47781">
    <property type="entry name" value="RuvA domain 2-like"/>
    <property type="match status" value="1"/>
</dbReference>
<accession>Q053A8</accession>
<organism>
    <name type="scientific">Leptospira borgpetersenii serovar Hardjo-bovis (strain L550)</name>
    <dbReference type="NCBI Taxonomy" id="355276"/>
    <lineage>
        <taxon>Bacteria</taxon>
        <taxon>Pseudomonadati</taxon>
        <taxon>Spirochaetota</taxon>
        <taxon>Spirochaetia</taxon>
        <taxon>Leptospirales</taxon>
        <taxon>Leptospiraceae</taxon>
        <taxon>Leptospira</taxon>
    </lineage>
</organism>
<gene>
    <name evidence="1" type="primary">ruvA</name>
    <name type="ordered locus">LBL_1063</name>
</gene>
<name>RUVA_LEPBL</name>
<reference key="1">
    <citation type="journal article" date="2006" name="Proc. Natl. Acad. Sci. U.S.A.">
        <title>Genome reduction in Leptospira borgpetersenii reflects limited transmission potential.</title>
        <authorList>
            <person name="Bulach D.M."/>
            <person name="Zuerner R.L."/>
            <person name="Wilson P."/>
            <person name="Seemann T."/>
            <person name="McGrath A."/>
            <person name="Cullen P.A."/>
            <person name="Davis J."/>
            <person name="Johnson M."/>
            <person name="Kuczek E."/>
            <person name="Alt D.P."/>
            <person name="Peterson-Burch B."/>
            <person name="Coppel R.L."/>
            <person name="Rood J.I."/>
            <person name="Davies J.K."/>
            <person name="Adler B."/>
        </authorList>
    </citation>
    <scope>NUCLEOTIDE SEQUENCE [LARGE SCALE GENOMIC DNA]</scope>
    <source>
        <strain>L550</strain>
    </source>
</reference>
<proteinExistence type="inferred from homology"/>
<keyword id="KW-0963">Cytoplasm</keyword>
<keyword id="KW-0227">DNA damage</keyword>
<keyword id="KW-0233">DNA recombination</keyword>
<keyword id="KW-0234">DNA repair</keyword>
<keyword id="KW-0238">DNA-binding</keyword>